<name>RL1_ECOLI</name>
<evidence type="ECO:0000269" key="1">
    <source>
    </source>
</evidence>
<evidence type="ECO:0000269" key="2">
    <source>
    </source>
</evidence>
<evidence type="ECO:0000269" key="3">
    <source>
    </source>
</evidence>
<evidence type="ECO:0000269" key="4">
    <source>
    </source>
</evidence>
<evidence type="ECO:0000269" key="5">
    <source>
    </source>
</evidence>
<evidence type="ECO:0000269" key="6">
    <source>
    </source>
</evidence>
<evidence type="ECO:0000303" key="7">
    <source>
    </source>
</evidence>
<evidence type="ECO:0000305" key="8"/>
<evidence type="ECO:0007829" key="9">
    <source>
        <dbReference type="PDB" id="6WNT"/>
    </source>
</evidence>
<gene>
    <name type="primary">rplA</name>
    <name type="ordered locus">b3984</name>
    <name type="ordered locus">JW3947</name>
</gene>
<keyword id="KW-0002">3D-structure</keyword>
<keyword id="KW-0903">Direct protein sequencing</keyword>
<keyword id="KW-1185">Reference proteome</keyword>
<keyword id="KW-0678">Repressor</keyword>
<keyword id="KW-0687">Ribonucleoprotein</keyword>
<keyword id="KW-0689">Ribosomal protein</keyword>
<keyword id="KW-0694">RNA-binding</keyword>
<keyword id="KW-0699">rRNA-binding</keyword>
<keyword id="KW-0810">Translation regulation</keyword>
<keyword id="KW-0820">tRNA-binding</keyword>
<organism>
    <name type="scientific">Escherichia coli (strain K12)</name>
    <dbReference type="NCBI Taxonomy" id="83333"/>
    <lineage>
        <taxon>Bacteria</taxon>
        <taxon>Pseudomonadati</taxon>
        <taxon>Pseudomonadota</taxon>
        <taxon>Gammaproteobacteria</taxon>
        <taxon>Enterobacterales</taxon>
        <taxon>Enterobacteriaceae</taxon>
        <taxon>Escherichia</taxon>
    </lineage>
</organism>
<protein>
    <recommendedName>
        <fullName evidence="7">Large ribosomal subunit protein uL1</fullName>
    </recommendedName>
    <alternativeName>
        <fullName>50S ribosomal protein L1</fullName>
    </alternativeName>
</protein>
<proteinExistence type="evidence at protein level"/>
<reference key="1">
    <citation type="journal article" date="1979" name="Proc. Natl. Acad. Sci. U.S.A.">
        <title>Nucleotide sequence of the ribosomal protein gene cluster adjacent to the gene for RNA polymerase subunit beta in Escherichia coli.</title>
        <authorList>
            <person name="Post L.E."/>
            <person name="Strycharz G.D."/>
            <person name="Nomura M."/>
            <person name="Lewis H."/>
            <person name="Dennis P.P."/>
        </authorList>
    </citation>
    <scope>NUCLEOTIDE SEQUENCE [GENOMIC DNA]</scope>
</reference>
<reference key="2">
    <citation type="journal article" date="1993" name="Nucleic Acids Res.">
        <title>Analysis of the Escherichia coli genome. IV. DNA sequence of the region from 89.2 to 92.8 minutes.</title>
        <authorList>
            <person name="Blattner F.R."/>
            <person name="Burland V.D."/>
            <person name="Plunkett G. III"/>
            <person name="Sofia H.J."/>
            <person name="Daniels D.L."/>
        </authorList>
    </citation>
    <scope>NUCLEOTIDE SEQUENCE [LARGE SCALE GENOMIC DNA]</scope>
    <source>
        <strain>K12 / MG1655 / ATCC 47076</strain>
    </source>
</reference>
<reference key="3">
    <citation type="journal article" date="1997" name="Science">
        <title>The complete genome sequence of Escherichia coli K-12.</title>
        <authorList>
            <person name="Blattner F.R."/>
            <person name="Plunkett G. III"/>
            <person name="Bloch C.A."/>
            <person name="Perna N.T."/>
            <person name="Burland V."/>
            <person name="Riley M."/>
            <person name="Collado-Vides J."/>
            <person name="Glasner J.D."/>
            <person name="Rode C.K."/>
            <person name="Mayhew G.F."/>
            <person name="Gregor J."/>
            <person name="Davis N.W."/>
            <person name="Kirkpatrick H.A."/>
            <person name="Goeden M.A."/>
            <person name="Rose D.J."/>
            <person name="Mau B."/>
            <person name="Shao Y."/>
        </authorList>
    </citation>
    <scope>NUCLEOTIDE SEQUENCE [LARGE SCALE GENOMIC DNA]</scope>
    <source>
        <strain>K12 / MG1655 / ATCC 47076</strain>
    </source>
</reference>
<reference key="4">
    <citation type="journal article" date="2006" name="Mol. Syst. Biol.">
        <title>Highly accurate genome sequences of Escherichia coli K-12 strains MG1655 and W3110.</title>
        <authorList>
            <person name="Hayashi K."/>
            <person name="Morooka N."/>
            <person name="Yamamoto Y."/>
            <person name="Fujita K."/>
            <person name="Isono K."/>
            <person name="Choi S."/>
            <person name="Ohtsubo E."/>
            <person name="Baba T."/>
            <person name="Wanner B.L."/>
            <person name="Mori H."/>
            <person name="Horiuchi T."/>
        </authorList>
    </citation>
    <scope>NUCLEOTIDE SEQUENCE [LARGE SCALE GENOMIC DNA]</scope>
    <source>
        <strain>K12 / W3110 / ATCC 27325 / DSM 5911</strain>
    </source>
</reference>
<reference key="5">
    <citation type="journal article" date="1978" name="FEBS Lett.">
        <title>The primary structure of protein L1 from the large ribosomal subunit of Escherichia coli.</title>
        <authorList>
            <person name="Brauer D."/>
            <person name="Oechsner I."/>
        </authorList>
    </citation>
    <scope>PROTEIN SEQUENCE OF 2-234</scope>
    <source>
        <strain>K</strain>
    </source>
</reference>
<reference key="6">
    <citation type="journal article" date="1979" name="FEBS Lett.">
        <authorList>
            <person name="Brauer D."/>
            <person name="Oechsner I."/>
        </authorList>
    </citation>
    <scope>ERRATUM OF PUBMED:365581</scope>
</reference>
<reference key="7">
    <citation type="journal article" date="1997" name="Electrophoresis">
        <title>Comparing the predicted and observed properties of proteins encoded in the genome of Escherichia coli K-12.</title>
        <authorList>
            <person name="Link A.J."/>
            <person name="Robison K."/>
            <person name="Church G.M."/>
        </authorList>
    </citation>
    <scope>PROTEIN SEQUENCE OF 2-13</scope>
    <source>
        <strain>K12 / EMG2</strain>
    </source>
</reference>
<reference key="8">
    <citation type="journal article" date="1995" name="EMBO J.">
        <title>Protein-rRNA binding features and their structural and functional implications in ribosomes as determined by cross-linking studies.</title>
        <authorList>
            <person name="Urlaub H."/>
            <person name="Kruft V."/>
            <person name="Bischof O."/>
            <person name="Mueller E.-C."/>
            <person name="Wittmann-Liebold B."/>
        </authorList>
    </citation>
    <scope>PROTEIN SEQUENCE OF 199-203</scope>
    <scope>CROSS-LINKING TO RRNA</scope>
    <source>
        <strain>MRE-600</strain>
    </source>
</reference>
<reference key="9">
    <citation type="journal article" date="1987" name="J. Biol. Chem.">
        <title>Incorporation of six additional proteins to complete the assembly map of the 50 S subunit from Escherichia coli ribosomes.</title>
        <authorList>
            <person name="Herold M."/>
            <person name="Nierhaus K.H."/>
        </authorList>
    </citation>
    <scope>ASSEMBLY MAP OF THE 50S SUBUNIT</scope>
    <source>
        <strain>K12</strain>
    </source>
</reference>
<reference key="10">
    <citation type="journal article" date="1987" name="Nucleic Acids Res.">
        <title>Translational regulation of the L11 ribosomal protein operon of Escherichia coli: mutations that define the target site for repression by L1.</title>
        <authorList>
            <person name="Thomas M.S."/>
            <person name="Nomura M."/>
        </authorList>
    </citation>
    <scope>MECHANISM OF TRANSLATION REGULATION</scope>
    <source>
        <strain>K12 / MC1061 / ATCC 53338 / DSM 7140</strain>
    </source>
</reference>
<reference key="11">
    <citation type="journal article" date="1995" name="Nucleic Acids Res.">
        <title>The ribosomal neighbourhood of the central fold of tRNA: cross-links from position 47 of tRNA located at the A, P or E site.</title>
        <authorList>
            <person name="Osswald M."/>
            <person name="Doering T."/>
            <person name="Brimacombe R."/>
        </authorList>
    </citation>
    <scope>CROSS-LINKING TO THE TRNA CENTRAL FOLD</scope>
    <source>
        <strain>MRE-600</strain>
    </source>
</reference>
<reference key="12">
    <citation type="journal article" date="1997" name="Electrophoresis">
        <title>Escherichia coli proteome analysis using the gene-protein database.</title>
        <authorList>
            <person name="VanBogelen R.A."/>
            <person name="Abshire K.Z."/>
            <person name="Moldover B."/>
            <person name="Olson E.R."/>
            <person name="Neidhardt F.C."/>
        </authorList>
    </citation>
    <scope>IDENTIFICATION BY 2D-GEL</scope>
</reference>
<reference key="13">
    <citation type="journal article" date="1999" name="Anal. Biochem.">
        <title>Observation of Escherichia coli ribosomal proteins and their posttranslational modifications by mass spectrometry.</title>
        <authorList>
            <person name="Arnold R.J."/>
            <person name="Reilly J.P."/>
        </authorList>
    </citation>
    <scope>MASS SPECTROMETRY</scope>
    <source>
        <strain>K12 / ATCC 25404 / DSM 5698 / NCIMB 11290</strain>
    </source>
</reference>
<reference key="14">
    <citation type="journal article" date="2014" name="Curr. Opin. Struct. Biol.">
        <title>A new system for naming ribosomal proteins.</title>
        <authorList>
            <person name="Ban N."/>
            <person name="Beckmann R."/>
            <person name="Cate J.H.D."/>
            <person name="Dinman J.D."/>
            <person name="Dragon F."/>
            <person name="Ellis S.R."/>
            <person name="Lafontaine D.L.J."/>
            <person name="Lindahl L."/>
            <person name="Liljas A."/>
            <person name="Lipton J.M."/>
            <person name="McAlear M.A."/>
            <person name="Moore P.B."/>
            <person name="Noller H.F."/>
            <person name="Ortega J."/>
            <person name="Panse V.G."/>
            <person name="Ramakrishnan V."/>
            <person name="Spahn C.M.T."/>
            <person name="Steitz T.A."/>
            <person name="Tchorzewski M."/>
            <person name="Tollervey D."/>
            <person name="Warren A.J."/>
            <person name="Williamson J.R."/>
            <person name="Wilson D."/>
            <person name="Yonath A."/>
            <person name="Yusupov M."/>
        </authorList>
    </citation>
    <scope>NOMENCLATURE</scope>
</reference>
<reference key="15">
    <citation type="journal article" date="2000" name="J. Mol. Biol.">
        <title>The 3D arrangement of the 23 S and 5 S rRNA in the Escherichia coli 50 S ribosomal subunit based on a cryo-electron microscopic reconstruction at 7.5 A resolution.</title>
        <authorList>
            <person name="Mueller F."/>
            <person name="Sommer I."/>
            <person name="Baranov P."/>
            <person name="Matadeen R."/>
            <person name="Stoldt M."/>
            <person name="Woehnert J."/>
            <person name="Goerlach M."/>
            <person name="van Heel M."/>
            <person name="Brimacombe R."/>
        </authorList>
    </citation>
    <scope>3D-STRUCTURE MODELING</scope>
    <source>
        <strain>MRE-600</strain>
    </source>
</reference>
<reference key="16">
    <citation type="journal article" date="2011" name="Nat. Chem. Biol.">
        <title>Identification of lysine succinylation as a new post-translational modification.</title>
        <authorList>
            <person name="Zhang Z."/>
            <person name="Tan M."/>
            <person name="Xie Z."/>
            <person name="Dai L."/>
            <person name="Chen Y."/>
            <person name="Zhao Y."/>
        </authorList>
    </citation>
    <scope>SUCCINYLATION AT LYS-105; LYS-154; LYS-186 AND LYS-197</scope>
    <source>
        <strain>K12</strain>
    </source>
</reference>
<reference key="17">
    <citation type="journal article" date="2003" name="Cell">
        <title>Locking and unlocking of ribosomal motions.</title>
        <authorList>
            <person name="Valle M."/>
            <person name="Zavialov A."/>
            <person name="Sengupta J."/>
            <person name="Rawat U."/>
            <person name="Ehrenberg M."/>
            <person name="Frank J."/>
        </authorList>
    </citation>
    <scope>3D-STRUCTURE MODELING OF RIBOSOMAL COMPLEXES IMPLYING THE INVOLVEMENT OF THE L1 STALK IN TRANSLOCATION OF TRNAS FROM THE P TO E SITE</scope>
</reference>
<reference key="18">
    <citation type="journal article" date="2005" name="Science">
        <title>Structures of the bacterial ribosome at 3.5 A resolution.</title>
        <authorList>
            <person name="Schuwirth B.S."/>
            <person name="Borovinskaya M.A."/>
            <person name="Hau C.W."/>
            <person name="Zhang W."/>
            <person name="Vila-Sanjurjo A."/>
            <person name="Holton J.M."/>
            <person name="Cate J.H.D."/>
        </authorList>
    </citation>
    <scope>LOCALIZATION IN THE 3.5 ANGSTROM RIBOSOMAL STRUCTURES AND DISCUSSION OF ITS MOVEMENT</scope>
    <source>
        <strain>MRE-600</strain>
    </source>
</reference>
<reference key="19">
    <citation type="journal article" date="2014" name="PLoS Biol.">
        <title>Structural and functional insights into the mode of action of a universally conserved Obg GTPase.</title>
        <authorList>
            <person name="Feng B."/>
            <person name="Mandava C.S."/>
            <person name="Guo Q."/>
            <person name="Wang J."/>
            <person name="Cao W."/>
            <person name="Li N."/>
            <person name="Zhang Y."/>
            <person name="Zhang Y."/>
            <person name="Wang Z."/>
            <person name="Wu J."/>
            <person name="Sanyal S."/>
            <person name="Lei J."/>
            <person name="Gao N."/>
        </authorList>
    </citation>
    <scope>STRUCTURE BY ELECTRON MICROSCOPY (5.5 ANGSTROMS) OF 50S RIBOSOMAL SUBUNIT IN COMPLEX WITH OBGE AND GMP-PNP</scope>
</reference>
<feature type="initiator methionine" description="Removed" evidence="5 6">
    <location>
        <position position="1"/>
    </location>
</feature>
<feature type="chain" id="PRO_0000125654" description="Large ribosomal subunit protein uL1">
    <location>
        <begin position="2"/>
        <end position="234"/>
    </location>
</feature>
<feature type="modified residue" description="N6-succinyllysine" evidence="4">
    <location>
        <position position="105"/>
    </location>
</feature>
<feature type="modified residue" description="N6-succinyllysine" evidence="4">
    <location>
        <position position="154"/>
    </location>
</feature>
<feature type="modified residue" description="N6-succinyllysine" evidence="4">
    <location>
        <position position="186"/>
    </location>
</feature>
<feature type="modified residue" description="N6-succinyllysine" evidence="4">
    <location>
        <position position="197"/>
    </location>
</feature>
<feature type="sequence conflict" description="In Ref. 7; AA sequence." evidence="8" ref="7">
    <original>R</original>
    <variation>I</variation>
    <location>
        <position position="12"/>
    </location>
</feature>
<feature type="helix" evidence="9">
    <location>
        <begin position="6"/>
        <end position="11"/>
    </location>
</feature>
<feature type="helix" evidence="9">
    <location>
        <begin position="23"/>
        <end position="33"/>
    </location>
</feature>
<feature type="strand" evidence="9">
    <location>
        <begin position="41"/>
        <end position="47"/>
    </location>
</feature>
<feature type="strand" evidence="9">
    <location>
        <begin position="52"/>
        <end position="54"/>
    </location>
</feature>
<feature type="turn" evidence="9">
    <location>
        <begin position="55"/>
        <end position="57"/>
    </location>
</feature>
<feature type="strand" evidence="9">
    <location>
        <begin position="60"/>
        <end position="64"/>
    </location>
</feature>
<feature type="strand" evidence="9">
    <location>
        <begin position="160"/>
        <end position="164"/>
    </location>
</feature>
<feature type="strand" evidence="9">
    <location>
        <begin position="167"/>
        <end position="177"/>
    </location>
</feature>
<feature type="helix" evidence="9">
    <location>
        <begin position="182"/>
        <end position="197"/>
    </location>
</feature>
<feature type="strand" evidence="9">
    <location>
        <begin position="211"/>
        <end position="216"/>
    </location>
</feature>
<accession>P0A7L0</accession>
<accession>P02384</accession>
<accession>Q2M8S0</accession>
<dbReference type="EMBL" id="V00339">
    <property type="protein sequence ID" value="CAA23622.1"/>
    <property type="molecule type" value="Genomic_DNA"/>
</dbReference>
<dbReference type="EMBL" id="U00006">
    <property type="protein sequence ID" value="AAC43082.1"/>
    <property type="molecule type" value="Genomic_DNA"/>
</dbReference>
<dbReference type="EMBL" id="U00096">
    <property type="protein sequence ID" value="AAC76958.1"/>
    <property type="molecule type" value="Genomic_DNA"/>
</dbReference>
<dbReference type="EMBL" id="AP009048">
    <property type="protein sequence ID" value="BAE77336.1"/>
    <property type="molecule type" value="Genomic_DNA"/>
</dbReference>
<dbReference type="PIR" id="S12573">
    <property type="entry name" value="R5EC1"/>
</dbReference>
<dbReference type="RefSeq" id="NP_418411.1">
    <property type="nucleotide sequence ID" value="NC_000913.3"/>
</dbReference>
<dbReference type="RefSeq" id="WP_001096684.1">
    <property type="nucleotide sequence ID" value="NZ_STEB01000045.1"/>
</dbReference>
<dbReference type="PDB" id="1EG0">
    <property type="method" value="EM"/>
    <property type="resolution" value="11.50 A"/>
    <property type="chains" value="N=1-229"/>
</dbReference>
<dbReference type="PDB" id="1ML5">
    <property type="method" value="EM"/>
    <property type="resolution" value="14.00 A"/>
    <property type="chains" value="c=2-229"/>
</dbReference>
<dbReference type="PDB" id="2RDO">
    <property type="method" value="EM"/>
    <property type="resolution" value="9.10 A"/>
    <property type="chains" value="9=2-234"/>
</dbReference>
<dbReference type="PDB" id="3J46">
    <property type="method" value="EM"/>
    <property type="resolution" value="10.10 A"/>
    <property type="chains" value="5=1-234"/>
</dbReference>
<dbReference type="PDB" id="3J5S">
    <property type="method" value="EM"/>
    <property type="resolution" value="7.50 A"/>
    <property type="chains" value="F=1-234"/>
</dbReference>
<dbReference type="PDB" id="3J8G">
    <property type="method" value="EM"/>
    <property type="resolution" value="5.00 A"/>
    <property type="chains" value="5=1-234"/>
</dbReference>
<dbReference type="PDB" id="3J9Z">
    <property type="method" value="EM"/>
    <property type="resolution" value="3.60 A"/>
    <property type="chains" value="LC=1-234"/>
</dbReference>
<dbReference type="PDB" id="3JA1">
    <property type="method" value="EM"/>
    <property type="resolution" value="3.60 A"/>
    <property type="chains" value="LC=1-234"/>
</dbReference>
<dbReference type="PDB" id="3JCD">
    <property type="method" value="EM"/>
    <property type="resolution" value="3.70 A"/>
    <property type="chains" value="5=1-234"/>
</dbReference>
<dbReference type="PDB" id="3JCE">
    <property type="method" value="EM"/>
    <property type="resolution" value="3.20 A"/>
    <property type="chains" value="5=1-234"/>
</dbReference>
<dbReference type="PDB" id="487D">
    <property type="method" value="EM"/>
    <property type="resolution" value="7.50 A"/>
    <property type="chains" value="H=29-201"/>
</dbReference>
<dbReference type="PDB" id="4CSU">
    <property type="method" value="EM"/>
    <property type="resolution" value="5.50 A"/>
    <property type="chains" value="5=1-234"/>
</dbReference>
<dbReference type="PDB" id="4U1U">
    <property type="method" value="X-ray"/>
    <property type="resolution" value="2.95 A"/>
    <property type="chains" value="B5=2-229"/>
</dbReference>
<dbReference type="PDB" id="4U1V">
    <property type="method" value="X-ray"/>
    <property type="resolution" value="3.00 A"/>
    <property type="chains" value="B5=2-229"/>
</dbReference>
<dbReference type="PDB" id="4U20">
    <property type="method" value="X-ray"/>
    <property type="resolution" value="2.90 A"/>
    <property type="chains" value="B5=2-229"/>
</dbReference>
<dbReference type="PDB" id="4U24">
    <property type="method" value="X-ray"/>
    <property type="resolution" value="2.90 A"/>
    <property type="chains" value="B5=2-229"/>
</dbReference>
<dbReference type="PDB" id="4U25">
    <property type="method" value="X-ray"/>
    <property type="resolution" value="2.90 A"/>
    <property type="chains" value="B5=2-229"/>
</dbReference>
<dbReference type="PDB" id="4U26">
    <property type="method" value="X-ray"/>
    <property type="resolution" value="2.80 A"/>
    <property type="chains" value="B5=2-229"/>
</dbReference>
<dbReference type="PDB" id="4U27">
    <property type="method" value="X-ray"/>
    <property type="resolution" value="2.80 A"/>
    <property type="chains" value="B5=2-229"/>
</dbReference>
<dbReference type="PDB" id="4V4V">
    <property type="method" value="EM"/>
    <property type="resolution" value="15.00 A"/>
    <property type="chains" value="B2=6-227"/>
</dbReference>
<dbReference type="PDB" id="4V4W">
    <property type="method" value="EM"/>
    <property type="resolution" value="15.00 A"/>
    <property type="chains" value="B2=6-227"/>
</dbReference>
<dbReference type="PDB" id="4V5H">
    <property type="method" value="EM"/>
    <property type="resolution" value="5.80 A"/>
    <property type="chains" value="B5=1-234"/>
</dbReference>
<dbReference type="PDB" id="4V65">
    <property type="method" value="EM"/>
    <property type="resolution" value="9.00 A"/>
    <property type="chains" value="BZ=5-220"/>
</dbReference>
<dbReference type="PDB" id="4V66">
    <property type="method" value="EM"/>
    <property type="resolution" value="9.00 A"/>
    <property type="chains" value="BZ=5-220"/>
</dbReference>
<dbReference type="PDB" id="4V69">
    <property type="method" value="EM"/>
    <property type="resolution" value="6.70 A"/>
    <property type="chains" value="B5=1-234"/>
</dbReference>
<dbReference type="PDB" id="4V6K">
    <property type="method" value="EM"/>
    <property type="resolution" value="8.25 A"/>
    <property type="chains" value="AC=1-234"/>
</dbReference>
<dbReference type="PDB" id="4V6L">
    <property type="method" value="EM"/>
    <property type="resolution" value="13.20 A"/>
    <property type="chains" value="BC=1-234"/>
</dbReference>
<dbReference type="PDB" id="4V6M">
    <property type="method" value="EM"/>
    <property type="resolution" value="7.10 A"/>
    <property type="chains" value="B5=1-234"/>
</dbReference>
<dbReference type="PDB" id="4V6N">
    <property type="method" value="EM"/>
    <property type="resolution" value="12.10 A"/>
    <property type="chains" value="AC=1-234"/>
</dbReference>
<dbReference type="PDB" id="4V6O">
    <property type="method" value="EM"/>
    <property type="resolution" value="14.70 A"/>
    <property type="chains" value="BC=1-234"/>
</dbReference>
<dbReference type="PDB" id="4V6P">
    <property type="method" value="EM"/>
    <property type="resolution" value="13.50 A"/>
    <property type="chains" value="BC=1-234"/>
</dbReference>
<dbReference type="PDB" id="4V6Q">
    <property type="method" value="EM"/>
    <property type="resolution" value="11.50 A"/>
    <property type="chains" value="BC=1-234"/>
</dbReference>
<dbReference type="PDB" id="4V6R">
    <property type="method" value="EM"/>
    <property type="resolution" value="11.50 A"/>
    <property type="chains" value="BC=1-234"/>
</dbReference>
<dbReference type="PDB" id="4V6S">
    <property type="method" value="EM"/>
    <property type="resolution" value="13.10 A"/>
    <property type="chains" value="AC=1-234"/>
</dbReference>
<dbReference type="PDB" id="4V6V">
    <property type="method" value="EM"/>
    <property type="resolution" value="9.80 A"/>
    <property type="chains" value="BC=1-234"/>
</dbReference>
<dbReference type="PDB" id="4V6Y">
    <property type="method" value="EM"/>
    <property type="resolution" value="12.00 A"/>
    <property type="chains" value="B5=1-234"/>
</dbReference>
<dbReference type="PDB" id="4V6Z">
    <property type="method" value="EM"/>
    <property type="resolution" value="12.00 A"/>
    <property type="chains" value="B5=1-234"/>
</dbReference>
<dbReference type="PDB" id="4V70">
    <property type="method" value="EM"/>
    <property type="resolution" value="17.00 A"/>
    <property type="chains" value="B5=1-234"/>
</dbReference>
<dbReference type="PDB" id="4V71">
    <property type="method" value="EM"/>
    <property type="resolution" value="20.00 A"/>
    <property type="chains" value="B5=1-234"/>
</dbReference>
<dbReference type="PDB" id="4V72">
    <property type="method" value="EM"/>
    <property type="resolution" value="13.00 A"/>
    <property type="chains" value="B5=1-234"/>
</dbReference>
<dbReference type="PDB" id="4V73">
    <property type="method" value="EM"/>
    <property type="resolution" value="15.00 A"/>
    <property type="chains" value="B5=1-234"/>
</dbReference>
<dbReference type="PDB" id="4V74">
    <property type="method" value="EM"/>
    <property type="resolution" value="17.00 A"/>
    <property type="chains" value="B5=1-234"/>
</dbReference>
<dbReference type="PDB" id="4V75">
    <property type="method" value="EM"/>
    <property type="resolution" value="12.00 A"/>
    <property type="chains" value="B5=1-234"/>
</dbReference>
<dbReference type="PDB" id="4V76">
    <property type="method" value="EM"/>
    <property type="resolution" value="17.00 A"/>
    <property type="chains" value="B5=1-234"/>
</dbReference>
<dbReference type="PDB" id="4V77">
    <property type="method" value="EM"/>
    <property type="resolution" value="17.00 A"/>
    <property type="chains" value="B5=1-234"/>
</dbReference>
<dbReference type="PDB" id="4V78">
    <property type="method" value="EM"/>
    <property type="resolution" value="20.00 A"/>
    <property type="chains" value="B5=1-234"/>
</dbReference>
<dbReference type="PDB" id="4V79">
    <property type="method" value="EM"/>
    <property type="resolution" value="15.00 A"/>
    <property type="chains" value="B5=1-234"/>
</dbReference>
<dbReference type="PDB" id="4V7A">
    <property type="method" value="EM"/>
    <property type="resolution" value="9.00 A"/>
    <property type="chains" value="B5=1-234"/>
</dbReference>
<dbReference type="PDB" id="4V7C">
    <property type="method" value="EM"/>
    <property type="resolution" value="7.60 A"/>
    <property type="chains" value="BC=2-234"/>
</dbReference>
<dbReference type="PDB" id="4V7D">
    <property type="method" value="EM"/>
    <property type="resolution" value="7.60 A"/>
    <property type="chains" value="AC=2-234"/>
</dbReference>
<dbReference type="PDB" id="4V7I">
    <property type="method" value="EM"/>
    <property type="resolution" value="9.60 A"/>
    <property type="chains" value="A5=1-234"/>
</dbReference>
<dbReference type="PDB" id="4WOI">
    <property type="method" value="X-ray"/>
    <property type="resolution" value="3.00 A"/>
    <property type="chains" value="B5=2-229"/>
</dbReference>
<dbReference type="PDB" id="5ADY">
    <property type="method" value="EM"/>
    <property type="resolution" value="4.50 A"/>
    <property type="chains" value="5=1-234"/>
</dbReference>
<dbReference type="PDB" id="5U9F">
    <property type="method" value="EM"/>
    <property type="resolution" value="3.20 A"/>
    <property type="chains" value="03=1-234"/>
</dbReference>
<dbReference type="PDB" id="5U9G">
    <property type="method" value="EM"/>
    <property type="resolution" value="3.20 A"/>
    <property type="chains" value="03=1-234"/>
</dbReference>
<dbReference type="PDB" id="5UYK">
    <property type="method" value="EM"/>
    <property type="resolution" value="3.90 A"/>
    <property type="chains" value="03=3-225"/>
</dbReference>
<dbReference type="PDB" id="5UYL">
    <property type="method" value="EM"/>
    <property type="resolution" value="3.60 A"/>
    <property type="chains" value="03=1-234"/>
</dbReference>
<dbReference type="PDB" id="5UYM">
    <property type="method" value="EM"/>
    <property type="resolution" value="3.20 A"/>
    <property type="chains" value="03=3-225"/>
</dbReference>
<dbReference type="PDB" id="5UYN">
    <property type="method" value="EM"/>
    <property type="resolution" value="4.00 A"/>
    <property type="chains" value="03=3-225"/>
</dbReference>
<dbReference type="PDB" id="5UYP">
    <property type="method" value="EM"/>
    <property type="resolution" value="3.90 A"/>
    <property type="chains" value="03=3-225"/>
</dbReference>
<dbReference type="PDB" id="5UYQ">
    <property type="method" value="EM"/>
    <property type="resolution" value="3.80 A"/>
    <property type="chains" value="03=3-225"/>
</dbReference>
<dbReference type="PDB" id="6BU8">
    <property type="method" value="EM"/>
    <property type="resolution" value="3.50 A"/>
    <property type="chains" value="03=3-225"/>
</dbReference>
<dbReference type="PDB" id="6DNC">
    <property type="method" value="EM"/>
    <property type="resolution" value="3.70 A"/>
    <property type="chains" value="E=1-234"/>
</dbReference>
<dbReference type="PDB" id="6ENJ">
    <property type="method" value="EM"/>
    <property type="resolution" value="3.70 A"/>
    <property type="chains" value="7=6-229"/>
</dbReference>
<dbReference type="PDB" id="6ENU">
    <property type="method" value="EM"/>
    <property type="resolution" value="3.10 A"/>
    <property type="chains" value="7=6-229"/>
</dbReference>
<dbReference type="PDB" id="6OFX">
    <property type="method" value="EM"/>
    <property type="resolution" value="3.30 A"/>
    <property type="chains" value="a=3-225"/>
</dbReference>
<dbReference type="PDB" id="6OG7">
    <property type="method" value="EM"/>
    <property type="resolution" value="3.30 A"/>
    <property type="chains" value="a=3-225"/>
</dbReference>
<dbReference type="PDB" id="6OGF">
    <property type="method" value="EM"/>
    <property type="resolution" value="3.90 A"/>
    <property type="chains" value="a=1-234"/>
</dbReference>
<dbReference type="PDB" id="6OGG">
    <property type="method" value="EM"/>
    <property type="resolution" value="4.20 A"/>
    <property type="chains" value="a=1-234"/>
</dbReference>
<dbReference type="PDB" id="6OGI">
    <property type="method" value="EM"/>
    <property type="resolution" value="3.40 A"/>
    <property type="chains" value="a=1-234"/>
</dbReference>
<dbReference type="PDB" id="6WD0">
    <property type="method" value="EM"/>
    <property type="resolution" value="3.00 A"/>
    <property type="chains" value="a=3-225"/>
</dbReference>
<dbReference type="PDB" id="6WD1">
    <property type="method" value="EM"/>
    <property type="resolution" value="3.30 A"/>
    <property type="chains" value="a=3-225"/>
</dbReference>
<dbReference type="PDB" id="6WD2">
    <property type="method" value="EM"/>
    <property type="resolution" value="3.60 A"/>
    <property type="chains" value="a=3-225"/>
</dbReference>
<dbReference type="PDB" id="6WD3">
    <property type="method" value="EM"/>
    <property type="resolution" value="3.60 A"/>
    <property type="chains" value="a=3-225"/>
</dbReference>
<dbReference type="PDB" id="6WD4">
    <property type="method" value="EM"/>
    <property type="resolution" value="3.70 A"/>
    <property type="chains" value="a=3-225"/>
</dbReference>
<dbReference type="PDB" id="6WD5">
    <property type="method" value="EM"/>
    <property type="resolution" value="3.60 A"/>
    <property type="chains" value="a=3-225"/>
</dbReference>
<dbReference type="PDB" id="6WD6">
    <property type="method" value="EM"/>
    <property type="resolution" value="3.70 A"/>
    <property type="chains" value="a=3-225"/>
</dbReference>
<dbReference type="PDB" id="6WD7">
    <property type="method" value="EM"/>
    <property type="resolution" value="3.90 A"/>
    <property type="chains" value="a=3-225"/>
</dbReference>
<dbReference type="PDB" id="6WD8">
    <property type="method" value="EM"/>
    <property type="resolution" value="3.70 A"/>
    <property type="chains" value="a=3-225"/>
</dbReference>
<dbReference type="PDB" id="6WD9">
    <property type="method" value="EM"/>
    <property type="resolution" value="3.70 A"/>
    <property type="chains" value="a=3-225"/>
</dbReference>
<dbReference type="PDB" id="6WDA">
    <property type="method" value="EM"/>
    <property type="resolution" value="3.80 A"/>
    <property type="chains" value="a=3-225"/>
</dbReference>
<dbReference type="PDB" id="6WDB">
    <property type="method" value="EM"/>
    <property type="resolution" value="4.00 A"/>
    <property type="chains" value="a=3-225"/>
</dbReference>
<dbReference type="PDB" id="6WDC">
    <property type="method" value="EM"/>
    <property type="resolution" value="4.20 A"/>
    <property type="chains" value="a=3-225"/>
</dbReference>
<dbReference type="PDB" id="6WDD">
    <property type="method" value="EM"/>
    <property type="resolution" value="3.20 A"/>
    <property type="chains" value="a=3-225"/>
</dbReference>
<dbReference type="PDB" id="6WDE">
    <property type="method" value="EM"/>
    <property type="resolution" value="3.00 A"/>
    <property type="chains" value="a=3-225"/>
</dbReference>
<dbReference type="PDB" id="6WDF">
    <property type="method" value="EM"/>
    <property type="resolution" value="3.30 A"/>
    <property type="chains" value="a=3-225"/>
</dbReference>
<dbReference type="PDB" id="6WDG">
    <property type="method" value="EM"/>
    <property type="resolution" value="3.30 A"/>
    <property type="chains" value="a=3-225"/>
</dbReference>
<dbReference type="PDB" id="6WDH">
    <property type="method" value="EM"/>
    <property type="resolution" value="4.30 A"/>
    <property type="chains" value="a=3-225"/>
</dbReference>
<dbReference type="PDB" id="6WDI">
    <property type="method" value="EM"/>
    <property type="resolution" value="4.00 A"/>
    <property type="chains" value="a=3-225"/>
</dbReference>
<dbReference type="PDB" id="6WDJ">
    <property type="method" value="EM"/>
    <property type="resolution" value="3.70 A"/>
    <property type="chains" value="a=3-225"/>
</dbReference>
<dbReference type="PDB" id="6WDK">
    <property type="method" value="EM"/>
    <property type="resolution" value="3.60 A"/>
    <property type="chains" value="a=3-225"/>
</dbReference>
<dbReference type="PDB" id="6WDL">
    <property type="method" value="EM"/>
    <property type="resolution" value="3.70 A"/>
    <property type="chains" value="a=3-225"/>
</dbReference>
<dbReference type="PDB" id="6WDM">
    <property type="method" value="EM"/>
    <property type="resolution" value="3.60 A"/>
    <property type="chains" value="a=3-225"/>
</dbReference>
<dbReference type="PDB" id="6WNT">
    <property type="method" value="EM"/>
    <property type="resolution" value="3.10 A"/>
    <property type="chains" value="a=3-225"/>
</dbReference>
<dbReference type="PDB" id="6WNV">
    <property type="method" value="EM"/>
    <property type="resolution" value="3.50 A"/>
    <property type="chains" value="a=3-225"/>
</dbReference>
<dbReference type="PDB" id="6WNW">
    <property type="method" value="EM"/>
    <property type="resolution" value="3.20 A"/>
    <property type="chains" value="a=3-225"/>
</dbReference>
<dbReference type="PDB" id="7JSZ">
    <property type="method" value="EM"/>
    <property type="resolution" value="3.70 A"/>
    <property type="chains" value="a=1-234"/>
</dbReference>
<dbReference type="PDB" id="7K50">
    <property type="method" value="EM"/>
    <property type="resolution" value="3.40 A"/>
    <property type="chains" value="a=3-225"/>
</dbReference>
<dbReference type="PDB" id="7K51">
    <property type="method" value="EM"/>
    <property type="resolution" value="3.50 A"/>
    <property type="chains" value="a=3-225"/>
</dbReference>
<dbReference type="PDB" id="7K52">
    <property type="method" value="EM"/>
    <property type="resolution" value="3.40 A"/>
    <property type="chains" value="a=3-225"/>
</dbReference>
<dbReference type="PDB" id="7K53">
    <property type="method" value="EM"/>
    <property type="resolution" value="3.20 A"/>
    <property type="chains" value="a=3-225"/>
</dbReference>
<dbReference type="PDB" id="7K54">
    <property type="method" value="EM"/>
    <property type="resolution" value="3.20 A"/>
    <property type="chains" value="a=3-225"/>
</dbReference>
<dbReference type="PDB" id="7K55">
    <property type="method" value="EM"/>
    <property type="resolution" value="3.30 A"/>
    <property type="chains" value="a=3-225"/>
</dbReference>
<dbReference type="PDB" id="7LV0">
    <property type="method" value="EM"/>
    <property type="resolution" value="3.20 A"/>
    <property type="chains" value="a=3-225"/>
</dbReference>
<dbReference type="PDB" id="7QG8">
    <property type="method" value="EM"/>
    <property type="resolution" value="3.97 A"/>
    <property type="chains" value="C=3-225"/>
</dbReference>
<dbReference type="PDB" id="7QGH">
    <property type="method" value="EM"/>
    <property type="resolution" value="4.48 A"/>
    <property type="chains" value="C=3-225"/>
</dbReference>
<dbReference type="PDB" id="7QGN">
    <property type="method" value="EM"/>
    <property type="resolution" value="3.37 A"/>
    <property type="chains" value="C=3-225"/>
</dbReference>
<dbReference type="PDB" id="7QGR">
    <property type="method" value="EM"/>
    <property type="resolution" value="5.70 A"/>
    <property type="chains" value="C=3-225"/>
</dbReference>
<dbReference type="PDB" id="7SS9">
    <property type="method" value="EM"/>
    <property type="resolution" value="3.90 A"/>
    <property type="chains" value="a=1-234"/>
</dbReference>
<dbReference type="PDB" id="7SSD">
    <property type="method" value="EM"/>
    <property type="resolution" value="3.30 A"/>
    <property type="chains" value="a=1-234"/>
</dbReference>
<dbReference type="PDB" id="7SSL">
    <property type="method" value="EM"/>
    <property type="resolution" value="3.80 A"/>
    <property type="chains" value="a=3-225"/>
</dbReference>
<dbReference type="PDB" id="7SSO">
    <property type="method" value="EM"/>
    <property type="resolution" value="3.20 A"/>
    <property type="chains" value="a=3-225"/>
</dbReference>
<dbReference type="PDB" id="7SSW">
    <property type="method" value="EM"/>
    <property type="resolution" value="3.80 A"/>
    <property type="chains" value="a=3-225"/>
</dbReference>
<dbReference type="PDB" id="7ST2">
    <property type="method" value="EM"/>
    <property type="resolution" value="2.90 A"/>
    <property type="chains" value="a=1-234"/>
</dbReference>
<dbReference type="PDB" id="7ST7">
    <property type="method" value="EM"/>
    <property type="resolution" value="3.20 A"/>
    <property type="chains" value="a=3-225"/>
</dbReference>
<dbReference type="PDB" id="7TOS">
    <property type="method" value="EM"/>
    <property type="resolution" value="2.90 A"/>
    <property type="chains" value="L1=3-225"/>
</dbReference>
<dbReference type="PDB" id="7UG7">
    <property type="method" value="EM"/>
    <property type="resolution" value="2.58 A"/>
    <property type="chains" value="LA=1-234"/>
</dbReference>
<dbReference type="PDB" id="8PEG">
    <property type="method" value="EM"/>
    <property type="resolution" value="3.30 A"/>
    <property type="chains" value="a=1-234"/>
</dbReference>
<dbReference type="PDB" id="8PKL">
    <property type="method" value="EM"/>
    <property type="resolution" value="3.09 A"/>
    <property type="chains" value="a=1-234"/>
</dbReference>
<dbReference type="PDB" id="8R3V">
    <property type="method" value="EM"/>
    <property type="resolution" value="3.28 A"/>
    <property type="chains" value="a2=1-234"/>
</dbReference>
<dbReference type="PDB" id="8RCL">
    <property type="method" value="EM"/>
    <property type="resolution" value="3.49 A"/>
    <property type="chains" value="a2=1-234"/>
</dbReference>
<dbReference type="PDB" id="8RCM">
    <property type="method" value="EM"/>
    <property type="resolution" value="3.59 A"/>
    <property type="chains" value="a2=1-234"/>
</dbReference>
<dbReference type="PDB" id="8RCS">
    <property type="method" value="EM"/>
    <property type="resolution" value="4.46 A"/>
    <property type="chains" value="a2=1-234"/>
</dbReference>
<dbReference type="PDB" id="8RCT">
    <property type="method" value="EM"/>
    <property type="resolution" value="5.32 A"/>
    <property type="chains" value="a2=1-234"/>
</dbReference>
<dbReference type="PDB" id="8VS9">
    <property type="method" value="EM"/>
    <property type="resolution" value="3.90 A"/>
    <property type="chains" value="L1=1-234"/>
</dbReference>
<dbReference type="PDB" id="8VSA">
    <property type="method" value="EM"/>
    <property type="resolution" value="3.70 A"/>
    <property type="chains" value="L1=1-234"/>
</dbReference>
<dbReference type="PDB" id="9GFT">
    <property type="method" value="EM"/>
    <property type="resolution" value="3.10 A"/>
    <property type="chains" value="AK/C=1-234"/>
</dbReference>
<dbReference type="PDB" id="9GGR">
    <property type="method" value="EM"/>
    <property type="resolution" value="3.20 A"/>
    <property type="chains" value="AK/C=1-234"/>
</dbReference>
<dbReference type="PDBsum" id="1EG0"/>
<dbReference type="PDBsum" id="1ML5"/>
<dbReference type="PDBsum" id="2RDO"/>
<dbReference type="PDBsum" id="3J46"/>
<dbReference type="PDBsum" id="3J5S"/>
<dbReference type="PDBsum" id="3J8G"/>
<dbReference type="PDBsum" id="3J9Z"/>
<dbReference type="PDBsum" id="3JA1"/>
<dbReference type="PDBsum" id="3JCD"/>
<dbReference type="PDBsum" id="3JCE"/>
<dbReference type="PDBsum" id="487D"/>
<dbReference type="PDBsum" id="4CSU"/>
<dbReference type="PDBsum" id="4U1U"/>
<dbReference type="PDBsum" id="4U1V"/>
<dbReference type="PDBsum" id="4U20"/>
<dbReference type="PDBsum" id="4U24"/>
<dbReference type="PDBsum" id="4U25"/>
<dbReference type="PDBsum" id="4U26"/>
<dbReference type="PDBsum" id="4U27"/>
<dbReference type="PDBsum" id="4V4V"/>
<dbReference type="PDBsum" id="4V4W"/>
<dbReference type="PDBsum" id="4V5H"/>
<dbReference type="PDBsum" id="4V65"/>
<dbReference type="PDBsum" id="4V66"/>
<dbReference type="PDBsum" id="4V69"/>
<dbReference type="PDBsum" id="4V6K"/>
<dbReference type="PDBsum" id="4V6L"/>
<dbReference type="PDBsum" id="4V6M"/>
<dbReference type="PDBsum" id="4V6N"/>
<dbReference type="PDBsum" id="4V6O"/>
<dbReference type="PDBsum" id="4V6P"/>
<dbReference type="PDBsum" id="4V6Q"/>
<dbReference type="PDBsum" id="4V6R"/>
<dbReference type="PDBsum" id="4V6S"/>
<dbReference type="PDBsum" id="4V6V"/>
<dbReference type="PDBsum" id="4V6Y"/>
<dbReference type="PDBsum" id="4V6Z"/>
<dbReference type="PDBsum" id="4V70"/>
<dbReference type="PDBsum" id="4V71"/>
<dbReference type="PDBsum" id="4V72"/>
<dbReference type="PDBsum" id="4V73"/>
<dbReference type="PDBsum" id="4V74"/>
<dbReference type="PDBsum" id="4V75"/>
<dbReference type="PDBsum" id="4V76"/>
<dbReference type="PDBsum" id="4V77"/>
<dbReference type="PDBsum" id="4V78"/>
<dbReference type="PDBsum" id="4V79"/>
<dbReference type="PDBsum" id="4V7A"/>
<dbReference type="PDBsum" id="4V7C"/>
<dbReference type="PDBsum" id="4V7D"/>
<dbReference type="PDBsum" id="4V7I"/>
<dbReference type="PDBsum" id="4WOI"/>
<dbReference type="PDBsum" id="5ADY"/>
<dbReference type="PDBsum" id="5U9F"/>
<dbReference type="PDBsum" id="5U9G"/>
<dbReference type="PDBsum" id="5UYK"/>
<dbReference type="PDBsum" id="5UYL"/>
<dbReference type="PDBsum" id="5UYM"/>
<dbReference type="PDBsum" id="5UYN"/>
<dbReference type="PDBsum" id="5UYP"/>
<dbReference type="PDBsum" id="5UYQ"/>
<dbReference type="PDBsum" id="6BU8"/>
<dbReference type="PDBsum" id="6DNC"/>
<dbReference type="PDBsum" id="6ENJ"/>
<dbReference type="PDBsum" id="6ENU"/>
<dbReference type="PDBsum" id="6OFX"/>
<dbReference type="PDBsum" id="6OG7"/>
<dbReference type="PDBsum" id="6OGF"/>
<dbReference type="PDBsum" id="6OGG"/>
<dbReference type="PDBsum" id="6OGI"/>
<dbReference type="PDBsum" id="6WD0"/>
<dbReference type="PDBsum" id="6WD1"/>
<dbReference type="PDBsum" id="6WD2"/>
<dbReference type="PDBsum" id="6WD3"/>
<dbReference type="PDBsum" id="6WD4"/>
<dbReference type="PDBsum" id="6WD5"/>
<dbReference type="PDBsum" id="6WD6"/>
<dbReference type="PDBsum" id="6WD7"/>
<dbReference type="PDBsum" id="6WD8"/>
<dbReference type="PDBsum" id="6WD9"/>
<dbReference type="PDBsum" id="6WDA"/>
<dbReference type="PDBsum" id="6WDB"/>
<dbReference type="PDBsum" id="6WDC"/>
<dbReference type="PDBsum" id="6WDD"/>
<dbReference type="PDBsum" id="6WDE"/>
<dbReference type="PDBsum" id="6WDF"/>
<dbReference type="PDBsum" id="6WDG"/>
<dbReference type="PDBsum" id="6WDH"/>
<dbReference type="PDBsum" id="6WDI"/>
<dbReference type="PDBsum" id="6WDJ"/>
<dbReference type="PDBsum" id="6WDK"/>
<dbReference type="PDBsum" id="6WDL"/>
<dbReference type="PDBsum" id="6WDM"/>
<dbReference type="PDBsum" id="6WNT"/>
<dbReference type="PDBsum" id="6WNV"/>
<dbReference type="PDBsum" id="6WNW"/>
<dbReference type="PDBsum" id="7JSZ"/>
<dbReference type="PDBsum" id="7K50"/>
<dbReference type="PDBsum" id="7K51"/>
<dbReference type="PDBsum" id="7K52"/>
<dbReference type="PDBsum" id="7K53"/>
<dbReference type="PDBsum" id="7K54"/>
<dbReference type="PDBsum" id="7K55"/>
<dbReference type="PDBsum" id="7LV0"/>
<dbReference type="PDBsum" id="7QG8"/>
<dbReference type="PDBsum" id="7QGH"/>
<dbReference type="PDBsum" id="7QGN"/>
<dbReference type="PDBsum" id="7QGR"/>
<dbReference type="PDBsum" id="7SS9"/>
<dbReference type="PDBsum" id="7SSD"/>
<dbReference type="PDBsum" id="7SSL"/>
<dbReference type="PDBsum" id="7SSO"/>
<dbReference type="PDBsum" id="7SSW"/>
<dbReference type="PDBsum" id="7ST2"/>
<dbReference type="PDBsum" id="7ST7"/>
<dbReference type="PDBsum" id="7TOS"/>
<dbReference type="PDBsum" id="7UG7"/>
<dbReference type="PDBsum" id="8PEG"/>
<dbReference type="PDBsum" id="8PKL"/>
<dbReference type="PDBsum" id="8R3V"/>
<dbReference type="PDBsum" id="8RCL"/>
<dbReference type="PDBsum" id="8RCM"/>
<dbReference type="PDBsum" id="8RCS"/>
<dbReference type="PDBsum" id="8RCT"/>
<dbReference type="PDBsum" id="8VS9"/>
<dbReference type="PDBsum" id="8VSA"/>
<dbReference type="PDBsum" id="9GFT"/>
<dbReference type="PDBsum" id="9GGR"/>
<dbReference type="EMDB" id="EMD-13952"/>
<dbReference type="EMDB" id="EMD-13955"/>
<dbReference type="EMDB" id="EMD-17631"/>
<dbReference type="EMDB" id="EMD-17743"/>
<dbReference type="EMDB" id="EMD-18875"/>
<dbReference type="EMDB" id="EMD-19054"/>
<dbReference type="EMDB" id="EMD-19055"/>
<dbReference type="EMDB" id="EMD-19058"/>
<dbReference type="EMDB" id="EMD-19059"/>
<dbReference type="EMDB" id="EMD-20048"/>
<dbReference type="EMDB" id="EMD-20052"/>
<dbReference type="EMDB" id="EMD-21625"/>
<dbReference type="EMDB" id="EMD-21630"/>
<dbReference type="EMDB" id="EMD-21631"/>
<dbReference type="EMDB" id="EMD-21632"/>
<dbReference type="EMDB" id="EMD-21633"/>
<dbReference type="EMDB" id="EMD-21634"/>
<dbReference type="EMDB" id="EMD-21635"/>
<dbReference type="EMDB" id="EMD-21636"/>
<dbReference type="EMDB" id="EMD-21637"/>
<dbReference type="EMDB" id="EMD-21638"/>
<dbReference type="EMDB" id="EMD-21639"/>
<dbReference type="EMDB" id="EMD-21640"/>
<dbReference type="EMDB" id="EMD-21641"/>
<dbReference type="EMDB" id="EMD-21856"/>
<dbReference type="EMDB" id="EMD-21857"/>
<dbReference type="EMDB" id="EMD-21858"/>
<dbReference type="EMDB" id="EMD-22464"/>
<dbReference type="EMDB" id="EMD-22669"/>
<dbReference type="EMDB" id="EMD-22670"/>
<dbReference type="EMDB" id="EMD-22671"/>
<dbReference type="EMDB" id="EMD-22672"/>
<dbReference type="EMDB" id="EMD-22673"/>
<dbReference type="EMDB" id="EMD-22674"/>
<dbReference type="EMDB" id="EMD-23528"/>
<dbReference type="EMDB" id="EMD-25405"/>
<dbReference type="EMDB" id="EMD-25407"/>
<dbReference type="EMDB" id="EMD-25409"/>
<dbReference type="EMDB" id="EMD-25411"/>
<dbReference type="EMDB" id="EMD-25415"/>
<dbReference type="EMDB" id="EMD-25418"/>
<dbReference type="EMDB" id="EMD-25421"/>
<dbReference type="EMDB" id="EMD-3899"/>
<dbReference type="EMDB" id="EMD-3903"/>
<dbReference type="EMDB" id="EMD-51318"/>
<dbReference type="EMDB" id="EMD-51340"/>
<dbReference type="EMDB" id="EMD-7289"/>
<dbReference type="EMDB" id="EMD-8615"/>
<dbReference type="EMDB" id="EMD-8616"/>
<dbReference type="EMDB" id="EMD-8617"/>
<dbReference type="EMDB" id="EMD-8618"/>
<dbReference type="EMDB" id="EMD-8619"/>
<dbReference type="EMDB" id="EMD-8620"/>
<dbReference type="SMR" id="P0A7L0"/>
<dbReference type="BioGRID" id="4259509">
    <property type="interactions" value="169"/>
</dbReference>
<dbReference type="BioGRID" id="852777">
    <property type="interactions" value="2"/>
</dbReference>
<dbReference type="ComplexPortal" id="CPX-3807">
    <property type="entry name" value="50S large ribosomal subunit"/>
</dbReference>
<dbReference type="DIP" id="DIP-35746N"/>
<dbReference type="FunCoup" id="P0A7L0">
    <property type="interactions" value="1244"/>
</dbReference>
<dbReference type="IntAct" id="P0A7L0">
    <property type="interactions" value="141"/>
</dbReference>
<dbReference type="STRING" id="511145.b3984"/>
<dbReference type="MoonProt" id="P0A7L0"/>
<dbReference type="jPOST" id="P0A7L0"/>
<dbReference type="PaxDb" id="511145-b3984"/>
<dbReference type="EnsemblBacteria" id="AAC76958">
    <property type="protein sequence ID" value="AAC76958"/>
    <property type="gene ID" value="b3984"/>
</dbReference>
<dbReference type="GeneID" id="93777910"/>
<dbReference type="GeneID" id="948483"/>
<dbReference type="KEGG" id="ecj:JW3947"/>
<dbReference type="KEGG" id="eco:b3984"/>
<dbReference type="KEGG" id="ecoc:C3026_21520"/>
<dbReference type="PATRIC" id="fig|1411691.4.peg.2728"/>
<dbReference type="EchoBASE" id="EB0857"/>
<dbReference type="eggNOG" id="COG0081">
    <property type="taxonomic scope" value="Bacteria"/>
</dbReference>
<dbReference type="HOGENOM" id="CLU_062853_0_0_6"/>
<dbReference type="InParanoid" id="P0A7L0"/>
<dbReference type="OMA" id="EFRVDKH"/>
<dbReference type="OrthoDB" id="9803740at2"/>
<dbReference type="PhylomeDB" id="P0A7L0"/>
<dbReference type="BioCyc" id="EcoCyc:EG10864-MONOMER"/>
<dbReference type="BioCyc" id="MetaCyc:EG10864-MONOMER"/>
<dbReference type="EvolutionaryTrace" id="P0A7L0"/>
<dbReference type="PRO" id="PR:P0A7L0"/>
<dbReference type="Proteomes" id="UP000000625">
    <property type="component" value="Chromosome"/>
</dbReference>
<dbReference type="GO" id="GO:0005737">
    <property type="term" value="C:cytoplasm"/>
    <property type="evidence" value="ECO:0000314"/>
    <property type="project" value="ComplexPortal"/>
</dbReference>
<dbReference type="GO" id="GO:0005829">
    <property type="term" value="C:cytosol"/>
    <property type="evidence" value="ECO:0000314"/>
    <property type="project" value="EcoCyc"/>
</dbReference>
<dbReference type="GO" id="GO:0022625">
    <property type="term" value="C:cytosolic large ribosomal subunit"/>
    <property type="evidence" value="ECO:0000314"/>
    <property type="project" value="CAFA"/>
</dbReference>
<dbReference type="GO" id="GO:0019843">
    <property type="term" value="F:rRNA binding"/>
    <property type="evidence" value="ECO:0007669"/>
    <property type="project" value="UniProtKB-UniRule"/>
</dbReference>
<dbReference type="GO" id="GO:0003735">
    <property type="term" value="F:structural constituent of ribosome"/>
    <property type="evidence" value="ECO:0000314"/>
    <property type="project" value="CAFA"/>
</dbReference>
<dbReference type="GO" id="GO:0000049">
    <property type="term" value="F:tRNA binding"/>
    <property type="evidence" value="ECO:0007669"/>
    <property type="project" value="UniProtKB-KW"/>
</dbReference>
<dbReference type="GO" id="GO:0002181">
    <property type="term" value="P:cytoplasmic translation"/>
    <property type="evidence" value="ECO:0000303"/>
    <property type="project" value="ComplexPortal"/>
</dbReference>
<dbReference type="GO" id="GO:0045947">
    <property type="term" value="P:negative regulation of translational initiation"/>
    <property type="evidence" value="ECO:0000314"/>
    <property type="project" value="EcoCyc"/>
</dbReference>
<dbReference type="GO" id="GO:0000027">
    <property type="term" value="P:ribosomal large subunit assembly"/>
    <property type="evidence" value="ECO:0000314"/>
    <property type="project" value="CAFA"/>
</dbReference>
<dbReference type="CDD" id="cd00403">
    <property type="entry name" value="Ribosomal_L1"/>
    <property type="match status" value="1"/>
</dbReference>
<dbReference type="FunFam" id="3.40.50.790:FF:000001">
    <property type="entry name" value="50S ribosomal protein L1"/>
    <property type="match status" value="1"/>
</dbReference>
<dbReference type="Gene3D" id="3.30.190.20">
    <property type="match status" value="1"/>
</dbReference>
<dbReference type="Gene3D" id="3.40.50.790">
    <property type="match status" value="1"/>
</dbReference>
<dbReference type="HAMAP" id="MF_01318_B">
    <property type="entry name" value="Ribosomal_uL1_B"/>
    <property type="match status" value="1"/>
</dbReference>
<dbReference type="InterPro" id="IPR005878">
    <property type="entry name" value="Ribosom_uL1_bac-type"/>
</dbReference>
<dbReference type="InterPro" id="IPR002143">
    <property type="entry name" value="Ribosomal_uL1"/>
</dbReference>
<dbReference type="InterPro" id="IPR023674">
    <property type="entry name" value="Ribosomal_uL1-like"/>
</dbReference>
<dbReference type="InterPro" id="IPR028364">
    <property type="entry name" value="Ribosomal_uL1/biogenesis"/>
</dbReference>
<dbReference type="InterPro" id="IPR016095">
    <property type="entry name" value="Ribosomal_uL1_3-a/b-sand"/>
</dbReference>
<dbReference type="InterPro" id="IPR023673">
    <property type="entry name" value="Ribosomal_uL1_CS"/>
</dbReference>
<dbReference type="NCBIfam" id="TIGR01169">
    <property type="entry name" value="rplA_bact"/>
    <property type="match status" value="1"/>
</dbReference>
<dbReference type="PANTHER" id="PTHR36427">
    <property type="entry name" value="54S RIBOSOMAL PROTEIN L1, MITOCHONDRIAL"/>
    <property type="match status" value="1"/>
</dbReference>
<dbReference type="PANTHER" id="PTHR36427:SF3">
    <property type="entry name" value="LARGE RIBOSOMAL SUBUNIT PROTEIN UL1M"/>
    <property type="match status" value="1"/>
</dbReference>
<dbReference type="Pfam" id="PF00687">
    <property type="entry name" value="Ribosomal_L1"/>
    <property type="match status" value="1"/>
</dbReference>
<dbReference type="PIRSF" id="PIRSF002155">
    <property type="entry name" value="Ribosomal_L1"/>
    <property type="match status" value="1"/>
</dbReference>
<dbReference type="SUPFAM" id="SSF56808">
    <property type="entry name" value="Ribosomal protein L1"/>
    <property type="match status" value="1"/>
</dbReference>
<dbReference type="PROSITE" id="PS01199">
    <property type="entry name" value="RIBOSOMAL_L1"/>
    <property type="match status" value="1"/>
</dbReference>
<comment type="function">
    <text evidence="2 3">One of the primary rRNA binding proteins, it binds very close to the 3'-end of the 23S rRNA. Forms part of the L1 stalk. It is often not seen in high-resolution crystal structures, but can be seen in cryo_EM and 3D reconstruction models. These indicate that the distal end of the stalk moves by approximately 20 angstroms (PubMed:12859903, PubMed:16272117). This stalk movement is thought to be coupled to movement of deacylated tRNA into and out of the E site, and thus to participate in tRNA translocation (PubMed:12859903, PubMed:16272117). Contacts the P and E site tRNAs.</text>
</comment>
<comment type="function">
    <text>Protein L1 is also a translational repressor protein, it controls the translation of the L11 operon by binding to its mRNA.</text>
</comment>
<comment type="subunit">
    <text>Part of the 50S ribosomal subunit. Cross-links to the P and E site tRNAs.</text>
</comment>
<comment type="interaction">
    <interactant intactId="EBI-543771">
        <id>P0A7L0</id>
    </interactant>
    <interactant intactId="EBI-548929">
        <id>P0ABQ0</id>
        <label>coaBC</label>
    </interactant>
    <organismsDiffer>false</organismsDiffer>
    <experiments>2</experiments>
</comment>
<comment type="interaction">
    <interactant intactId="EBI-543771">
        <id>P0A7L0</id>
    </interactant>
    <interactant intactId="EBI-547581">
        <id>P0A978</id>
        <label>cspG</label>
    </interactant>
    <organismsDiffer>false</organismsDiffer>
    <experiments>3</experiments>
</comment>
<comment type="interaction">
    <interactant intactId="EBI-543771">
        <id>P0A7L0</id>
    </interactant>
    <interactant intactId="EBI-549259">
        <id>P0ABS5</id>
        <label>dnaG</label>
    </interactant>
    <organismsDiffer>false</organismsDiffer>
    <experiments>2</experiments>
</comment>
<comment type="interaction">
    <interactant intactId="EBI-543771">
        <id>P0A7L0</id>
    </interactant>
    <interactant intactId="EBI-549140">
        <id>P06710</id>
        <label>dnaX</label>
    </interactant>
    <organismsDiffer>false</organismsDiffer>
    <experiments>2</experiments>
</comment>
<comment type="interaction">
    <interactant intactId="EBI-543771">
        <id>P0A7L0</id>
    </interactant>
    <interactant intactId="EBI-554314">
        <id>P0A738</id>
        <label>moaC</label>
    </interactant>
    <organismsDiffer>false</organismsDiffer>
    <experiments>2</experiments>
</comment>
<comment type="interaction">
    <interactant intactId="EBI-543771">
        <id>P0A7L0</id>
    </interactant>
    <interactant intactId="EBI-551254">
        <id>P0A8M3</id>
        <label>thrS</label>
    </interactant>
    <organismsDiffer>false</organismsDiffer>
    <experiments>3</experiments>
</comment>
<comment type="mass spectrometry" mass="24598.9" method="MALDI" evidence="1"/>
<comment type="similarity">
    <text evidence="8">Belongs to the universal ribosomal protein uL1 family.</text>
</comment>
<sequence length="234" mass="24730">MAKLTKRMRVIREKVDATKQYDINEAIALLKELATAKFVESVDVAVNLGIDARKSDQNVRGATVLPHGTGRSVRVAVFTQGANAEAAKAAGAELVGMEDLADQIKKGEMNFDVVIASPDAMRVVGQLGQVLGPRGLMPNPKVGTVTPNVAEAVKNAKAGQVRYRNDKNGIIHTTIGKVDFDADKLKENLEALLVALKKAKPTQAKGVYIKKVSISTTMGAGVAVDQAGLSASVN</sequence>